<reference key="1">
    <citation type="journal article" date="2009" name="BMC Genomics">
        <title>Evidence for niche adaptation in the genome of the bovine pathogen Streptococcus uberis.</title>
        <authorList>
            <person name="Ward P.N."/>
            <person name="Holden M.T.G."/>
            <person name="Leigh J.A."/>
            <person name="Lennard N."/>
            <person name="Bignell A."/>
            <person name="Barron A."/>
            <person name="Clark L."/>
            <person name="Quail M.A."/>
            <person name="Woodward J."/>
            <person name="Barrell B.G."/>
            <person name="Egan S.A."/>
            <person name="Field T.R."/>
            <person name="Maskell D."/>
            <person name="Kehoe M."/>
            <person name="Dowson C.G."/>
            <person name="Chanter N."/>
            <person name="Whatmore A.M."/>
            <person name="Bentley S.D."/>
            <person name="Parkhill J."/>
        </authorList>
    </citation>
    <scope>NUCLEOTIDE SEQUENCE [LARGE SCALE GENOMIC DNA]</scope>
    <source>
        <strain>ATCC BAA-854 / 0140J</strain>
    </source>
</reference>
<evidence type="ECO:0000255" key="1">
    <source>
        <dbReference type="HAMAP-Rule" id="MF_01526"/>
    </source>
</evidence>
<protein>
    <recommendedName>
        <fullName evidence="1">UPF0342 protein SUB0718</fullName>
    </recommendedName>
</protein>
<dbReference type="EMBL" id="AM946015">
    <property type="protein sequence ID" value="CAR41635.1"/>
    <property type="molecule type" value="Genomic_DNA"/>
</dbReference>
<dbReference type="RefSeq" id="WP_012658235.1">
    <property type="nucleotide sequence ID" value="NC_012004.1"/>
</dbReference>
<dbReference type="SMR" id="B9DU47"/>
<dbReference type="STRING" id="218495.SUB0718"/>
<dbReference type="KEGG" id="sub:SUB0718"/>
<dbReference type="eggNOG" id="COG3679">
    <property type="taxonomic scope" value="Bacteria"/>
</dbReference>
<dbReference type="HOGENOM" id="CLU_140243_2_0_9"/>
<dbReference type="OrthoDB" id="9811402at2"/>
<dbReference type="Proteomes" id="UP000000449">
    <property type="component" value="Chromosome"/>
</dbReference>
<dbReference type="Gene3D" id="1.20.1500.10">
    <property type="entry name" value="YheA/YmcA-like"/>
    <property type="match status" value="1"/>
</dbReference>
<dbReference type="HAMAP" id="MF_01526">
    <property type="entry name" value="UPF0342"/>
    <property type="match status" value="1"/>
</dbReference>
<dbReference type="InterPro" id="IPR010368">
    <property type="entry name" value="Com_YlbF"/>
</dbReference>
<dbReference type="InterPro" id="IPR023378">
    <property type="entry name" value="YheA/YmcA-like_dom_sf"/>
</dbReference>
<dbReference type="NCBIfam" id="NF010209">
    <property type="entry name" value="PRK13676.1-1"/>
    <property type="match status" value="1"/>
</dbReference>
<dbReference type="Pfam" id="PF06133">
    <property type="entry name" value="Com_YlbF"/>
    <property type="match status" value="1"/>
</dbReference>
<dbReference type="SUPFAM" id="SSF158622">
    <property type="entry name" value="YheA/YmcA-like"/>
    <property type="match status" value="1"/>
</dbReference>
<organism>
    <name type="scientific">Streptococcus uberis (strain ATCC BAA-854 / 0140J)</name>
    <dbReference type="NCBI Taxonomy" id="218495"/>
    <lineage>
        <taxon>Bacteria</taxon>
        <taxon>Bacillati</taxon>
        <taxon>Bacillota</taxon>
        <taxon>Bacilli</taxon>
        <taxon>Lactobacillales</taxon>
        <taxon>Streptococcaceae</taxon>
        <taxon>Streptococcus</taxon>
    </lineage>
</organism>
<feature type="chain" id="PRO_1000185146" description="UPF0342 protein SUB0718">
    <location>
        <begin position="1"/>
        <end position="112"/>
    </location>
</feature>
<gene>
    <name type="ordered locus">SUB0718</name>
</gene>
<proteinExistence type="inferred from homology"/>
<sequence>MTQEIYEYANKIERALRNLPEYKKVVAAKEDIEKDSEASNIFEEFFKLQAKLKEMIQNGQTPSNEEQETIHQLSSKIESNELLKAYFEAQQSLSVYINDIERIIFNPLKDLI</sequence>
<keyword id="KW-1185">Reference proteome</keyword>
<accession>B9DU47</accession>
<name>Y718_STRU0</name>
<comment type="similarity">
    <text evidence="1">Belongs to the UPF0342 family.</text>
</comment>